<protein>
    <recommendedName>
        <fullName evidence="1">Probable nicotinate-nucleotide adenylyltransferase</fullName>
        <ecNumber evidence="1">2.7.7.18</ecNumber>
    </recommendedName>
    <alternativeName>
        <fullName evidence="1">Deamido-NAD(+) diphosphorylase</fullName>
    </alternativeName>
    <alternativeName>
        <fullName evidence="1">Deamido-NAD(+) pyrophosphorylase</fullName>
    </alternativeName>
    <alternativeName>
        <fullName evidence="1">Nicotinate mononucleotide adenylyltransferase</fullName>
        <shortName evidence="1">NaMN adenylyltransferase</shortName>
    </alternativeName>
</protein>
<sequence>MARRELLTPGLKVGLLGGSFNPAHEGHLHVTRMCLRALGLDRVWWLVSPQNPLKSDAGMASFDRRLASAEKMARDPRICVSDIEARLGTRYTVDTLAALTSRFPQIRFVWLMGADNLIQLPHWARWRDIVQTVPIAVYPRPGFTLKARLSPAATALRDVTLDATDAALLPLLTAPALAFLDGPESSQSATSIRERGGWSLR</sequence>
<comment type="function">
    <text evidence="1">Catalyzes the reversible adenylation of nicotinate mononucleotide (NaMN) to nicotinic acid adenine dinucleotide (NaAD).</text>
</comment>
<comment type="catalytic activity">
    <reaction evidence="1">
        <text>nicotinate beta-D-ribonucleotide + ATP + H(+) = deamido-NAD(+) + diphosphate</text>
        <dbReference type="Rhea" id="RHEA:22860"/>
        <dbReference type="ChEBI" id="CHEBI:15378"/>
        <dbReference type="ChEBI" id="CHEBI:30616"/>
        <dbReference type="ChEBI" id="CHEBI:33019"/>
        <dbReference type="ChEBI" id="CHEBI:57502"/>
        <dbReference type="ChEBI" id="CHEBI:58437"/>
        <dbReference type="EC" id="2.7.7.18"/>
    </reaction>
</comment>
<comment type="pathway">
    <text evidence="1">Cofactor biosynthesis; NAD(+) biosynthesis; deamido-NAD(+) from nicotinate D-ribonucleotide: step 1/1.</text>
</comment>
<comment type="similarity">
    <text evidence="1">Belongs to the NadD family.</text>
</comment>
<gene>
    <name evidence="1" type="primary">nadD</name>
    <name type="ordered locus">Plav_1477</name>
</gene>
<feature type="chain" id="PRO_0000336716" description="Probable nicotinate-nucleotide adenylyltransferase">
    <location>
        <begin position="1"/>
        <end position="201"/>
    </location>
</feature>
<feature type="region of interest" description="Disordered" evidence="2">
    <location>
        <begin position="182"/>
        <end position="201"/>
    </location>
</feature>
<feature type="compositionally biased region" description="Basic and acidic residues" evidence="2">
    <location>
        <begin position="192"/>
        <end position="201"/>
    </location>
</feature>
<proteinExistence type="inferred from homology"/>
<organism>
    <name type="scientific">Parvibaculum lavamentivorans (strain DS-1 / DSM 13023 / NCIMB 13966)</name>
    <dbReference type="NCBI Taxonomy" id="402881"/>
    <lineage>
        <taxon>Bacteria</taxon>
        <taxon>Pseudomonadati</taxon>
        <taxon>Pseudomonadota</taxon>
        <taxon>Alphaproteobacteria</taxon>
        <taxon>Hyphomicrobiales</taxon>
        <taxon>Parvibaculaceae</taxon>
        <taxon>Parvibaculum</taxon>
    </lineage>
</organism>
<name>NADD_PARL1</name>
<dbReference type="EC" id="2.7.7.18" evidence="1"/>
<dbReference type="EMBL" id="CP000774">
    <property type="protein sequence ID" value="ABS63097.1"/>
    <property type="molecule type" value="Genomic_DNA"/>
</dbReference>
<dbReference type="RefSeq" id="WP_012110380.1">
    <property type="nucleotide sequence ID" value="NC_009719.1"/>
</dbReference>
<dbReference type="SMR" id="A7HT64"/>
<dbReference type="STRING" id="402881.Plav_1477"/>
<dbReference type="KEGG" id="pla:Plav_1477"/>
<dbReference type="eggNOG" id="COG1057">
    <property type="taxonomic scope" value="Bacteria"/>
</dbReference>
<dbReference type="HOGENOM" id="CLU_069765_2_0_5"/>
<dbReference type="OrthoDB" id="5295945at2"/>
<dbReference type="UniPathway" id="UPA00253">
    <property type="reaction ID" value="UER00332"/>
</dbReference>
<dbReference type="Proteomes" id="UP000006377">
    <property type="component" value="Chromosome"/>
</dbReference>
<dbReference type="GO" id="GO:0005524">
    <property type="term" value="F:ATP binding"/>
    <property type="evidence" value="ECO:0007669"/>
    <property type="project" value="UniProtKB-KW"/>
</dbReference>
<dbReference type="GO" id="GO:0004515">
    <property type="term" value="F:nicotinate-nucleotide adenylyltransferase activity"/>
    <property type="evidence" value="ECO:0007669"/>
    <property type="project" value="UniProtKB-UniRule"/>
</dbReference>
<dbReference type="GO" id="GO:0009435">
    <property type="term" value="P:NAD biosynthetic process"/>
    <property type="evidence" value="ECO:0007669"/>
    <property type="project" value="UniProtKB-UniRule"/>
</dbReference>
<dbReference type="CDD" id="cd02165">
    <property type="entry name" value="NMNAT"/>
    <property type="match status" value="1"/>
</dbReference>
<dbReference type="Gene3D" id="3.40.50.620">
    <property type="entry name" value="HUPs"/>
    <property type="match status" value="1"/>
</dbReference>
<dbReference type="HAMAP" id="MF_00244">
    <property type="entry name" value="NaMN_adenylyltr"/>
    <property type="match status" value="1"/>
</dbReference>
<dbReference type="InterPro" id="IPR004821">
    <property type="entry name" value="Cyt_trans-like"/>
</dbReference>
<dbReference type="InterPro" id="IPR005248">
    <property type="entry name" value="NadD/NMNAT"/>
</dbReference>
<dbReference type="InterPro" id="IPR014729">
    <property type="entry name" value="Rossmann-like_a/b/a_fold"/>
</dbReference>
<dbReference type="NCBIfam" id="TIGR00482">
    <property type="entry name" value="nicotinate (nicotinamide) nucleotide adenylyltransferase"/>
    <property type="match status" value="1"/>
</dbReference>
<dbReference type="NCBIfam" id="NF000843">
    <property type="entry name" value="PRK00071.2-2"/>
    <property type="match status" value="1"/>
</dbReference>
<dbReference type="NCBIfam" id="NF000845">
    <property type="entry name" value="PRK00071.2-4"/>
    <property type="match status" value="1"/>
</dbReference>
<dbReference type="PANTHER" id="PTHR39321">
    <property type="entry name" value="NICOTINATE-NUCLEOTIDE ADENYLYLTRANSFERASE-RELATED"/>
    <property type="match status" value="1"/>
</dbReference>
<dbReference type="PANTHER" id="PTHR39321:SF3">
    <property type="entry name" value="PHOSPHOPANTETHEINE ADENYLYLTRANSFERASE"/>
    <property type="match status" value="1"/>
</dbReference>
<dbReference type="Pfam" id="PF01467">
    <property type="entry name" value="CTP_transf_like"/>
    <property type="match status" value="1"/>
</dbReference>
<dbReference type="SUPFAM" id="SSF52374">
    <property type="entry name" value="Nucleotidylyl transferase"/>
    <property type="match status" value="1"/>
</dbReference>
<evidence type="ECO:0000255" key="1">
    <source>
        <dbReference type="HAMAP-Rule" id="MF_00244"/>
    </source>
</evidence>
<evidence type="ECO:0000256" key="2">
    <source>
        <dbReference type="SAM" id="MobiDB-lite"/>
    </source>
</evidence>
<accession>A7HT64</accession>
<keyword id="KW-0067">ATP-binding</keyword>
<keyword id="KW-0520">NAD</keyword>
<keyword id="KW-0547">Nucleotide-binding</keyword>
<keyword id="KW-0548">Nucleotidyltransferase</keyword>
<keyword id="KW-0662">Pyridine nucleotide biosynthesis</keyword>
<keyword id="KW-1185">Reference proteome</keyword>
<keyword id="KW-0808">Transferase</keyword>
<reference key="1">
    <citation type="journal article" date="2011" name="Stand. Genomic Sci.">
        <title>Complete genome sequence of Parvibaculum lavamentivorans type strain (DS-1(T)).</title>
        <authorList>
            <person name="Schleheck D."/>
            <person name="Weiss M."/>
            <person name="Pitluck S."/>
            <person name="Bruce D."/>
            <person name="Land M.L."/>
            <person name="Han S."/>
            <person name="Saunders E."/>
            <person name="Tapia R."/>
            <person name="Detter C."/>
            <person name="Brettin T."/>
            <person name="Han J."/>
            <person name="Woyke T."/>
            <person name="Goodwin L."/>
            <person name="Pennacchio L."/>
            <person name="Nolan M."/>
            <person name="Cook A.M."/>
            <person name="Kjelleberg S."/>
            <person name="Thomas T."/>
        </authorList>
    </citation>
    <scope>NUCLEOTIDE SEQUENCE [LARGE SCALE GENOMIC DNA]</scope>
    <source>
        <strain>DS-1 / DSM 13023 / NCIMB 13966</strain>
    </source>
</reference>